<keyword id="KW-0240">DNA-directed RNA polymerase</keyword>
<keyword id="KW-0460">Magnesium</keyword>
<keyword id="KW-0479">Metal-binding</keyword>
<keyword id="KW-0548">Nucleotidyltransferase</keyword>
<keyword id="KW-0804">Transcription</keyword>
<keyword id="KW-0808">Transferase</keyword>
<keyword id="KW-0862">Zinc</keyword>
<gene>
    <name evidence="1" type="primary">rpoC</name>
    <name type="ordered locus">YPTS_0305</name>
</gene>
<organism>
    <name type="scientific">Yersinia pseudotuberculosis serotype IB (strain PB1/+)</name>
    <dbReference type="NCBI Taxonomy" id="502801"/>
    <lineage>
        <taxon>Bacteria</taxon>
        <taxon>Pseudomonadati</taxon>
        <taxon>Pseudomonadota</taxon>
        <taxon>Gammaproteobacteria</taxon>
        <taxon>Enterobacterales</taxon>
        <taxon>Yersiniaceae</taxon>
        <taxon>Yersinia</taxon>
    </lineage>
</organism>
<reference key="1">
    <citation type="submission" date="2008-04" db="EMBL/GenBank/DDBJ databases">
        <title>Complete sequence of Yersinia pseudotuberculosis PB1/+.</title>
        <authorList>
            <person name="Copeland A."/>
            <person name="Lucas S."/>
            <person name="Lapidus A."/>
            <person name="Glavina del Rio T."/>
            <person name="Dalin E."/>
            <person name="Tice H."/>
            <person name="Bruce D."/>
            <person name="Goodwin L."/>
            <person name="Pitluck S."/>
            <person name="Munk A.C."/>
            <person name="Brettin T."/>
            <person name="Detter J.C."/>
            <person name="Han C."/>
            <person name="Tapia R."/>
            <person name="Schmutz J."/>
            <person name="Larimer F."/>
            <person name="Land M."/>
            <person name="Hauser L."/>
            <person name="Challacombe J.F."/>
            <person name="Green L."/>
            <person name="Lindler L.E."/>
            <person name="Nikolich M.P."/>
            <person name="Richardson P."/>
        </authorList>
    </citation>
    <scope>NUCLEOTIDE SEQUENCE [LARGE SCALE GENOMIC DNA]</scope>
    <source>
        <strain>PB1/+</strain>
    </source>
</reference>
<accession>B2K114</accession>
<feature type="chain" id="PRO_0000353465" description="DNA-directed RNA polymerase subunit beta'">
    <location>
        <begin position="1"/>
        <end position="1406"/>
    </location>
</feature>
<feature type="binding site" evidence="1">
    <location>
        <position position="70"/>
    </location>
    <ligand>
        <name>Zn(2+)</name>
        <dbReference type="ChEBI" id="CHEBI:29105"/>
        <label>1</label>
    </ligand>
</feature>
<feature type="binding site" evidence="1">
    <location>
        <position position="72"/>
    </location>
    <ligand>
        <name>Zn(2+)</name>
        <dbReference type="ChEBI" id="CHEBI:29105"/>
        <label>1</label>
    </ligand>
</feature>
<feature type="binding site" evidence="1">
    <location>
        <position position="85"/>
    </location>
    <ligand>
        <name>Zn(2+)</name>
        <dbReference type="ChEBI" id="CHEBI:29105"/>
        <label>1</label>
    </ligand>
</feature>
<feature type="binding site" evidence="1">
    <location>
        <position position="88"/>
    </location>
    <ligand>
        <name>Zn(2+)</name>
        <dbReference type="ChEBI" id="CHEBI:29105"/>
        <label>1</label>
    </ligand>
</feature>
<feature type="binding site" evidence="1">
    <location>
        <position position="460"/>
    </location>
    <ligand>
        <name>Mg(2+)</name>
        <dbReference type="ChEBI" id="CHEBI:18420"/>
    </ligand>
</feature>
<feature type="binding site" evidence="1">
    <location>
        <position position="462"/>
    </location>
    <ligand>
        <name>Mg(2+)</name>
        <dbReference type="ChEBI" id="CHEBI:18420"/>
    </ligand>
</feature>
<feature type="binding site" evidence="1">
    <location>
        <position position="464"/>
    </location>
    <ligand>
        <name>Mg(2+)</name>
        <dbReference type="ChEBI" id="CHEBI:18420"/>
    </ligand>
</feature>
<feature type="binding site" evidence="1">
    <location>
        <position position="814"/>
    </location>
    <ligand>
        <name>Zn(2+)</name>
        <dbReference type="ChEBI" id="CHEBI:29105"/>
        <label>2</label>
    </ligand>
</feature>
<feature type="binding site" evidence="1">
    <location>
        <position position="888"/>
    </location>
    <ligand>
        <name>Zn(2+)</name>
        <dbReference type="ChEBI" id="CHEBI:29105"/>
        <label>2</label>
    </ligand>
</feature>
<feature type="binding site" evidence="1">
    <location>
        <position position="895"/>
    </location>
    <ligand>
        <name>Zn(2+)</name>
        <dbReference type="ChEBI" id="CHEBI:29105"/>
        <label>2</label>
    </ligand>
</feature>
<feature type="binding site" evidence="1">
    <location>
        <position position="898"/>
    </location>
    <ligand>
        <name>Zn(2+)</name>
        <dbReference type="ChEBI" id="CHEBI:29105"/>
        <label>2</label>
    </ligand>
</feature>
<comment type="function">
    <text evidence="1">DNA-dependent RNA polymerase catalyzes the transcription of DNA into RNA using the four ribonucleoside triphosphates as substrates.</text>
</comment>
<comment type="catalytic activity">
    <reaction evidence="1">
        <text>RNA(n) + a ribonucleoside 5'-triphosphate = RNA(n+1) + diphosphate</text>
        <dbReference type="Rhea" id="RHEA:21248"/>
        <dbReference type="Rhea" id="RHEA-COMP:14527"/>
        <dbReference type="Rhea" id="RHEA-COMP:17342"/>
        <dbReference type="ChEBI" id="CHEBI:33019"/>
        <dbReference type="ChEBI" id="CHEBI:61557"/>
        <dbReference type="ChEBI" id="CHEBI:140395"/>
        <dbReference type="EC" id="2.7.7.6"/>
    </reaction>
</comment>
<comment type="cofactor">
    <cofactor evidence="1">
        <name>Mg(2+)</name>
        <dbReference type="ChEBI" id="CHEBI:18420"/>
    </cofactor>
    <text evidence="1">Binds 1 Mg(2+) ion per subunit.</text>
</comment>
<comment type="cofactor">
    <cofactor evidence="1">
        <name>Zn(2+)</name>
        <dbReference type="ChEBI" id="CHEBI:29105"/>
    </cofactor>
    <text evidence="1">Binds 2 Zn(2+) ions per subunit.</text>
</comment>
<comment type="subunit">
    <text evidence="1">The RNAP catalytic core consists of 2 alpha, 1 beta, 1 beta' and 1 omega subunit. When a sigma factor is associated with the core the holoenzyme is formed, which can initiate transcription.</text>
</comment>
<comment type="similarity">
    <text evidence="1">Belongs to the RNA polymerase beta' chain family.</text>
</comment>
<name>RPOC_YERPB</name>
<sequence length="1406" mass="154904">MKDLLKFLKAQTKTEEFDAIKIALASPDMIRSWSFGEVKKPETINYRTFKPERDGLFCARIFGPVKDYECLCGKYKRLKHRGVICEKCGVEVTQTKVRRERMGHIELASPTAHIWFLKSLPSRIGLLLDMPLRDIERVLYFESYVVIEGGMTNLERRQILTEEQYLDALEEFGDEFDAKMGAEAIQALLKNMDLEAECEILREELNETNSETKRKKLTKRIKLLEAFVQSGNKPEWMILTVLPVLPPDLRPLVPLDGGRFATSDLNDLYRRVINRNNRLKRLLDLAAPDIIVRNEKRMLQEAVDALLDNGRRGRAITGSNKRPLKSLADMIKGKQGRFRQNLLGKRVDYSGRSVITVGPYLRLHQCGLPKKMALELFKPFIYGKLELRGLATTIKAAKKMVEREEAVVWDILDEVIREHPVLLNRAPTLHRLGIQAFEPVLIEGKAIQLHPLVCAAYNADFDGDQMAVHVPLTLEAQLEARALMMSTNNILSPANGEPIIVPSQDVVLGLYYMTRDCVNAKGEGMVLTGPKEAERIYRAGLASLHARVKVRITEEIRNTEGESITRTSIIDTTVGRAILWMIVPQGLPYSIVNQPLGKKAISKMLNTCYRILGLKPTVIFADQIMYTGFAYAARSGASVGIDDMVIPEAKAGIIEEAETEVAEIQEQFQSGLVTAGERYNKVIDIWAAANERVAKAMMDNLSVEDVVNRDGVVEQQVSFNSIFMMADSGARGSAAQIRQLAGMRGLMAKPDGSIIETPITANFREGLNVLQYFISTHGARKGLADTALKTANSGYLTRRLVDVAQDLVVTEDDCGTHNGIVMTPVIEGGDVKEPLRDRVLGRVTAEEVIKPGSADILVPRNTLLDEKWCDLLEENSVDSVKVRSVVSCETDFGVCANCYGRDLARGHIINKGEAVGVIAAQSIGEPGTQLTMRTFHIGGAASRAAAESSIQVKNKGSLKLSNVKFVTNAAGKLVITSRNTELKLIDEFGRTKESYKVPYGAVMAKGDGAEVQGGETVANWDPHIMPVVTEVSGFIRFADMVDGQTITRQTDELTGLSSLVVLDSAERTGSGKDLRPALKIVDAKGNDVLIPGTDMPAQYFLPGKAIVQLEDGIQIGAGDTLARIPQESSGTKDITGGLPRVADLFEARRPKEPAILAEISGIISFGKETKGKRRLVISPLDGSDAYEEMIPKWRQLNVFEGEVVERGDVVSDGPESPHDILRLRGVHAVTRYITNEVQEVYRLQGVKINDKHIEVIVRQMLRKGTIVDAGSTDFLEGEQAEMSRVKIANRKLAAEGKIEATFTRDLLGITKASLATESFISAASFQETTRVLTEAAVAGKRDELRGLKENVIVGRLIPAGTGYAYHQDRMRRKAQGEAPVVPQVSADEATANLAELLNAGFGNNKG</sequence>
<proteinExistence type="inferred from homology"/>
<evidence type="ECO:0000255" key="1">
    <source>
        <dbReference type="HAMAP-Rule" id="MF_01322"/>
    </source>
</evidence>
<protein>
    <recommendedName>
        <fullName evidence="1">DNA-directed RNA polymerase subunit beta'</fullName>
        <shortName evidence="1">RNAP subunit beta'</shortName>
        <ecNumber evidence="1">2.7.7.6</ecNumber>
    </recommendedName>
    <alternativeName>
        <fullName evidence="1">RNA polymerase subunit beta'</fullName>
    </alternativeName>
    <alternativeName>
        <fullName evidence="1">Transcriptase subunit beta'</fullName>
    </alternativeName>
</protein>
<dbReference type="EC" id="2.7.7.6" evidence="1"/>
<dbReference type="EMBL" id="CP001048">
    <property type="protein sequence ID" value="ACC87296.1"/>
    <property type="molecule type" value="Genomic_DNA"/>
</dbReference>
<dbReference type="RefSeq" id="WP_002210677.1">
    <property type="nucleotide sequence ID" value="NZ_CP009780.1"/>
</dbReference>
<dbReference type="SMR" id="B2K114"/>
<dbReference type="GeneID" id="96663777"/>
<dbReference type="KEGG" id="ypb:YPTS_0305"/>
<dbReference type="PATRIC" id="fig|502801.10.peg.3980"/>
<dbReference type="GO" id="GO:0000428">
    <property type="term" value="C:DNA-directed RNA polymerase complex"/>
    <property type="evidence" value="ECO:0007669"/>
    <property type="project" value="UniProtKB-KW"/>
</dbReference>
<dbReference type="GO" id="GO:0003677">
    <property type="term" value="F:DNA binding"/>
    <property type="evidence" value="ECO:0007669"/>
    <property type="project" value="UniProtKB-UniRule"/>
</dbReference>
<dbReference type="GO" id="GO:0003899">
    <property type="term" value="F:DNA-directed RNA polymerase activity"/>
    <property type="evidence" value="ECO:0007669"/>
    <property type="project" value="UniProtKB-UniRule"/>
</dbReference>
<dbReference type="GO" id="GO:0000287">
    <property type="term" value="F:magnesium ion binding"/>
    <property type="evidence" value="ECO:0007669"/>
    <property type="project" value="UniProtKB-UniRule"/>
</dbReference>
<dbReference type="GO" id="GO:0008270">
    <property type="term" value="F:zinc ion binding"/>
    <property type="evidence" value="ECO:0007669"/>
    <property type="project" value="UniProtKB-UniRule"/>
</dbReference>
<dbReference type="GO" id="GO:0006351">
    <property type="term" value="P:DNA-templated transcription"/>
    <property type="evidence" value="ECO:0007669"/>
    <property type="project" value="UniProtKB-UniRule"/>
</dbReference>
<dbReference type="CDD" id="cd02655">
    <property type="entry name" value="RNAP_beta'_C"/>
    <property type="match status" value="1"/>
</dbReference>
<dbReference type="CDD" id="cd01609">
    <property type="entry name" value="RNAP_beta'_N"/>
    <property type="match status" value="1"/>
</dbReference>
<dbReference type="FunFam" id="1.10.132.30:FF:000003">
    <property type="entry name" value="DNA-directed RNA polymerase subunit beta"/>
    <property type="match status" value="1"/>
</dbReference>
<dbReference type="FunFam" id="1.10.150.390:FF:000002">
    <property type="entry name" value="DNA-directed RNA polymerase subunit beta"/>
    <property type="match status" value="1"/>
</dbReference>
<dbReference type="FunFam" id="1.10.274.100:FF:000002">
    <property type="entry name" value="DNA-directed RNA polymerase subunit beta"/>
    <property type="match status" value="1"/>
</dbReference>
<dbReference type="FunFam" id="1.10.40.90:FF:000001">
    <property type="entry name" value="DNA-directed RNA polymerase subunit beta"/>
    <property type="match status" value="1"/>
</dbReference>
<dbReference type="FunFam" id="2.40.50.100:FF:000012">
    <property type="entry name" value="DNA-directed RNA polymerase subunit beta"/>
    <property type="match status" value="1"/>
</dbReference>
<dbReference type="FunFam" id="2.40.50.100:FF:000016">
    <property type="entry name" value="DNA-directed RNA polymerase subunit beta"/>
    <property type="match status" value="1"/>
</dbReference>
<dbReference type="FunFam" id="2.40.50.100:FF:000019">
    <property type="entry name" value="DNA-directed RNA polymerase subunit beta"/>
    <property type="match status" value="1"/>
</dbReference>
<dbReference type="FunFam" id="4.10.860.120:FF:000001">
    <property type="entry name" value="DNA-directed RNA polymerase subunit beta"/>
    <property type="match status" value="1"/>
</dbReference>
<dbReference type="Gene3D" id="1.10.132.30">
    <property type="match status" value="1"/>
</dbReference>
<dbReference type="Gene3D" id="1.10.150.390">
    <property type="match status" value="1"/>
</dbReference>
<dbReference type="Gene3D" id="1.10.1790.20">
    <property type="match status" value="1"/>
</dbReference>
<dbReference type="Gene3D" id="1.10.40.90">
    <property type="match status" value="1"/>
</dbReference>
<dbReference type="Gene3D" id="2.40.40.20">
    <property type="match status" value="1"/>
</dbReference>
<dbReference type="Gene3D" id="2.40.50.100">
    <property type="match status" value="3"/>
</dbReference>
<dbReference type="Gene3D" id="4.10.860.120">
    <property type="entry name" value="RNA polymerase II, clamp domain"/>
    <property type="match status" value="1"/>
</dbReference>
<dbReference type="Gene3D" id="1.10.274.100">
    <property type="entry name" value="RNA polymerase Rpb1, domain 3"/>
    <property type="match status" value="1"/>
</dbReference>
<dbReference type="HAMAP" id="MF_01322">
    <property type="entry name" value="RNApol_bact_RpoC"/>
    <property type="match status" value="1"/>
</dbReference>
<dbReference type="InterPro" id="IPR045867">
    <property type="entry name" value="DNA-dir_RpoC_beta_prime"/>
</dbReference>
<dbReference type="InterPro" id="IPR012754">
    <property type="entry name" value="DNA-dir_RpoC_beta_prime_bact"/>
</dbReference>
<dbReference type="InterPro" id="IPR000722">
    <property type="entry name" value="RNA_pol_asu"/>
</dbReference>
<dbReference type="InterPro" id="IPR006592">
    <property type="entry name" value="RNA_pol_N"/>
</dbReference>
<dbReference type="InterPro" id="IPR007080">
    <property type="entry name" value="RNA_pol_Rpb1_1"/>
</dbReference>
<dbReference type="InterPro" id="IPR007066">
    <property type="entry name" value="RNA_pol_Rpb1_3"/>
</dbReference>
<dbReference type="InterPro" id="IPR042102">
    <property type="entry name" value="RNA_pol_Rpb1_3_sf"/>
</dbReference>
<dbReference type="InterPro" id="IPR007083">
    <property type="entry name" value="RNA_pol_Rpb1_4"/>
</dbReference>
<dbReference type="InterPro" id="IPR007081">
    <property type="entry name" value="RNA_pol_Rpb1_5"/>
</dbReference>
<dbReference type="InterPro" id="IPR044893">
    <property type="entry name" value="RNA_pol_Rpb1_clamp_domain"/>
</dbReference>
<dbReference type="InterPro" id="IPR038120">
    <property type="entry name" value="Rpb1_funnel_sf"/>
</dbReference>
<dbReference type="NCBIfam" id="TIGR02386">
    <property type="entry name" value="rpoC_TIGR"/>
    <property type="match status" value="1"/>
</dbReference>
<dbReference type="PANTHER" id="PTHR19376">
    <property type="entry name" value="DNA-DIRECTED RNA POLYMERASE"/>
    <property type="match status" value="1"/>
</dbReference>
<dbReference type="PANTHER" id="PTHR19376:SF54">
    <property type="entry name" value="DNA-DIRECTED RNA POLYMERASE SUBUNIT BETA"/>
    <property type="match status" value="1"/>
</dbReference>
<dbReference type="Pfam" id="PF04997">
    <property type="entry name" value="RNA_pol_Rpb1_1"/>
    <property type="match status" value="1"/>
</dbReference>
<dbReference type="Pfam" id="PF00623">
    <property type="entry name" value="RNA_pol_Rpb1_2"/>
    <property type="match status" value="2"/>
</dbReference>
<dbReference type="Pfam" id="PF04983">
    <property type="entry name" value="RNA_pol_Rpb1_3"/>
    <property type="match status" value="1"/>
</dbReference>
<dbReference type="Pfam" id="PF05000">
    <property type="entry name" value="RNA_pol_Rpb1_4"/>
    <property type="match status" value="1"/>
</dbReference>
<dbReference type="Pfam" id="PF04998">
    <property type="entry name" value="RNA_pol_Rpb1_5"/>
    <property type="match status" value="1"/>
</dbReference>
<dbReference type="SMART" id="SM00663">
    <property type="entry name" value="RPOLA_N"/>
    <property type="match status" value="1"/>
</dbReference>
<dbReference type="SUPFAM" id="SSF64484">
    <property type="entry name" value="beta and beta-prime subunits of DNA dependent RNA-polymerase"/>
    <property type="match status" value="1"/>
</dbReference>